<gene>
    <name type="primary">ZNHIT2</name>
    <name type="synonym">C11orf5</name>
</gene>
<feature type="chain" id="PRO_0000173548" description="Zinc finger HIT domain-containing protein 2">
    <location>
        <begin position="1"/>
        <end position="403"/>
    </location>
</feature>
<feature type="zinc finger region" description="HIT-type" evidence="1">
    <location>
        <begin position="7"/>
        <end position="41"/>
    </location>
</feature>
<feature type="region of interest" description="Disordered" evidence="2">
    <location>
        <begin position="72"/>
        <end position="98"/>
    </location>
</feature>
<feature type="binding site" evidence="1">
    <location>
        <position position="7"/>
    </location>
    <ligand>
        <name>Zn(2+)</name>
        <dbReference type="ChEBI" id="CHEBI:29105"/>
        <label>1</label>
    </ligand>
</feature>
<feature type="binding site" evidence="1">
    <location>
        <position position="10"/>
    </location>
    <ligand>
        <name>Zn(2+)</name>
        <dbReference type="ChEBI" id="CHEBI:29105"/>
        <label>1</label>
    </ligand>
</feature>
<feature type="binding site" evidence="1">
    <location>
        <position position="22"/>
    </location>
    <ligand>
        <name>Zn(2+)</name>
        <dbReference type="ChEBI" id="CHEBI:29105"/>
        <label>2</label>
    </ligand>
</feature>
<feature type="binding site" evidence="1">
    <location>
        <position position="25"/>
    </location>
    <ligand>
        <name>Zn(2+)</name>
        <dbReference type="ChEBI" id="CHEBI:29105"/>
        <label>2</label>
    </ligand>
</feature>
<feature type="binding site" evidence="1">
    <location>
        <position position="30"/>
    </location>
    <ligand>
        <name>Zn(2+)</name>
        <dbReference type="ChEBI" id="CHEBI:29105"/>
        <label>1</label>
    </ligand>
</feature>
<feature type="binding site" evidence="1">
    <location>
        <position position="34"/>
    </location>
    <ligand>
        <name>Zn(2+)</name>
        <dbReference type="ChEBI" id="CHEBI:29105"/>
        <label>1</label>
    </ligand>
</feature>
<feature type="binding site" evidence="1">
    <location>
        <position position="38"/>
    </location>
    <ligand>
        <name>Zn(2+)</name>
        <dbReference type="ChEBI" id="CHEBI:29105"/>
        <label>2</label>
    </ligand>
</feature>
<feature type="binding site" evidence="1">
    <location>
        <position position="41"/>
    </location>
    <ligand>
        <name>Zn(2+)</name>
        <dbReference type="ChEBI" id="CHEBI:29105"/>
        <label>2</label>
    </ligand>
</feature>
<feature type="modified residue" description="N-acetylmethionine" evidence="8">
    <location>
        <position position="1"/>
    </location>
</feature>
<feature type="modified residue" description="Phosphothreonine" evidence="7 9">
    <location>
        <position position="161"/>
    </location>
</feature>
<feature type="sequence variant" id="VAR_035720" description="In a breast cancer sample; somatic mutation; dbSNP:rs1185334988." evidence="4">
    <original>A</original>
    <variation>P</variation>
    <location>
        <position position="59"/>
    </location>
</feature>
<feature type="sequence variant" id="VAR_053757" description="In dbSNP:rs11556920.">
    <original>E</original>
    <variation>K</variation>
    <location>
        <position position="155"/>
    </location>
</feature>
<feature type="sequence variant" id="VAR_053758" description="In dbSNP:rs35983251.">
    <original>A</original>
    <variation>V</variation>
    <location>
        <position position="176"/>
    </location>
</feature>
<feature type="strand" evidence="10">
    <location>
        <begin position="5"/>
        <end position="7"/>
    </location>
</feature>
<feature type="strand" evidence="10">
    <location>
        <begin position="16"/>
        <end position="18"/>
    </location>
</feature>
<feature type="turn" evidence="10">
    <location>
        <begin position="23"/>
        <end position="25"/>
    </location>
</feature>
<feature type="strand" evidence="10">
    <location>
        <begin position="28"/>
        <end position="31"/>
    </location>
</feature>
<feature type="helix" evidence="10">
    <location>
        <begin position="32"/>
        <end position="38"/>
    </location>
</feature>
<feature type="helix" evidence="10">
    <location>
        <begin position="41"/>
        <end position="44"/>
    </location>
</feature>
<name>ZNHI2_HUMAN</name>
<organism>
    <name type="scientific">Homo sapiens</name>
    <name type="common">Human</name>
    <dbReference type="NCBI Taxonomy" id="9606"/>
    <lineage>
        <taxon>Eukaryota</taxon>
        <taxon>Metazoa</taxon>
        <taxon>Chordata</taxon>
        <taxon>Craniata</taxon>
        <taxon>Vertebrata</taxon>
        <taxon>Euteleostomi</taxon>
        <taxon>Mammalia</taxon>
        <taxon>Eutheria</taxon>
        <taxon>Euarchontoglires</taxon>
        <taxon>Primates</taxon>
        <taxon>Haplorrhini</taxon>
        <taxon>Catarrhini</taxon>
        <taxon>Hominidae</taxon>
        <taxon>Homo</taxon>
    </lineage>
</organism>
<reference key="1">
    <citation type="journal article" date="2000" name="Mamm. Genome">
        <title>Molecular characterization of human and murine c11orf5, a new member of the FAUNA gene cluster.</title>
        <authorList>
            <person name="Lemmens I.H."/>
            <person name="Farnebo F."/>
            <person name="Piehl F."/>
            <person name="Merregaert J."/>
            <person name="Van de Ven W.J.M."/>
            <person name="Larsson C."/>
            <person name="Kas K."/>
        </authorList>
    </citation>
    <scope>NUCLEOTIDE SEQUENCE [MRNA]</scope>
    <scope>TISSUE SPECIFICITY</scope>
</reference>
<reference key="2">
    <citation type="journal article" date="2004" name="Genome Res.">
        <title>The status, quality, and expansion of the NIH full-length cDNA project: the Mammalian Gene Collection (MGC).</title>
        <authorList>
            <consortium name="The MGC Project Team"/>
        </authorList>
    </citation>
    <scope>NUCLEOTIDE SEQUENCE [LARGE SCALE MRNA]</scope>
    <source>
        <tissue>Pancreas</tissue>
    </source>
</reference>
<reference key="3">
    <citation type="journal article" date="2008" name="Mol. Cell">
        <title>Kinase-selective enrichment enables quantitative phosphoproteomics of the kinome across the cell cycle.</title>
        <authorList>
            <person name="Daub H."/>
            <person name="Olsen J.V."/>
            <person name="Bairlein M."/>
            <person name="Gnad F."/>
            <person name="Oppermann F.S."/>
            <person name="Korner R."/>
            <person name="Greff Z."/>
            <person name="Keri G."/>
            <person name="Stemmann O."/>
            <person name="Mann M."/>
        </authorList>
    </citation>
    <scope>PHOSPHORYLATION [LARGE SCALE ANALYSIS] AT THR-161</scope>
    <scope>IDENTIFICATION BY MASS SPECTROMETRY [LARGE SCALE ANALYSIS]</scope>
    <source>
        <tissue>Cervix carcinoma</tissue>
    </source>
</reference>
<reference key="4">
    <citation type="journal article" date="2008" name="Proc. Natl. Acad. Sci. U.S.A.">
        <title>A quantitative atlas of mitotic phosphorylation.</title>
        <authorList>
            <person name="Dephoure N."/>
            <person name="Zhou C."/>
            <person name="Villen J."/>
            <person name="Beausoleil S.A."/>
            <person name="Bakalarski C.E."/>
            <person name="Elledge S.J."/>
            <person name="Gygi S.P."/>
        </authorList>
    </citation>
    <scope>IDENTIFICATION BY MASS SPECTROMETRY [LARGE SCALE ANALYSIS]</scope>
    <source>
        <tissue>Cervix carcinoma</tissue>
    </source>
</reference>
<reference key="5">
    <citation type="journal article" date="2011" name="BMC Syst. Biol.">
        <title>Initial characterization of the human central proteome.</title>
        <authorList>
            <person name="Burkard T.R."/>
            <person name="Planyavsky M."/>
            <person name="Kaupe I."/>
            <person name="Breitwieser F.P."/>
            <person name="Buerckstuemmer T."/>
            <person name="Bennett K.L."/>
            <person name="Superti-Furga G."/>
            <person name="Colinge J."/>
        </authorList>
    </citation>
    <scope>IDENTIFICATION BY MASS SPECTROMETRY [LARGE SCALE ANALYSIS]</scope>
</reference>
<reference key="6">
    <citation type="journal article" date="2012" name="Proc. Natl. Acad. Sci. U.S.A.">
        <title>N-terminal acetylome analyses and functional insights of the N-terminal acetyltransferase NatB.</title>
        <authorList>
            <person name="Van Damme P."/>
            <person name="Lasa M."/>
            <person name="Polevoda B."/>
            <person name="Gazquez C."/>
            <person name="Elosegui-Artola A."/>
            <person name="Kim D.S."/>
            <person name="De Juan-Pardo E."/>
            <person name="Demeyer K."/>
            <person name="Hole K."/>
            <person name="Larrea E."/>
            <person name="Timmerman E."/>
            <person name="Prieto J."/>
            <person name="Arnesen T."/>
            <person name="Sherman F."/>
            <person name="Gevaert K."/>
            <person name="Aldabe R."/>
        </authorList>
    </citation>
    <scope>ACETYLATION [LARGE SCALE ANALYSIS] AT MET-1</scope>
    <scope>IDENTIFICATION BY MASS SPECTROMETRY [LARGE SCALE ANALYSIS]</scope>
</reference>
<reference key="7">
    <citation type="journal article" date="2013" name="J. Proteome Res.">
        <title>Toward a comprehensive characterization of a human cancer cell phosphoproteome.</title>
        <authorList>
            <person name="Zhou H."/>
            <person name="Di Palma S."/>
            <person name="Preisinger C."/>
            <person name="Peng M."/>
            <person name="Polat A.N."/>
            <person name="Heck A.J."/>
            <person name="Mohammed S."/>
        </authorList>
    </citation>
    <scope>PHOSPHORYLATION [LARGE SCALE ANALYSIS] AT THR-161</scope>
    <scope>IDENTIFICATION BY MASS SPECTROMETRY [LARGE SCALE ANALYSIS]</scope>
    <source>
        <tissue>Erythroleukemia</tissue>
    </source>
</reference>
<reference key="8">
    <citation type="journal article" date="2017" name="Nat. Commun.">
        <title>R2TP/Prefoldin-like component RUVBL1/RUVBL2 directly interacts with ZNHIT2 to regulate assembly of U5 small nuclear ribonucleoprotein.</title>
        <authorList>
            <person name="Cloutier P."/>
            <person name="Poitras C."/>
            <person name="Durand M."/>
            <person name="Hekmat O."/>
            <person name="Fiola-Masson E."/>
            <person name="Bouchard A."/>
            <person name="Faubert D."/>
            <person name="Chabot B."/>
            <person name="Coulombe B."/>
        </authorList>
    </citation>
    <scope>FUNCTION</scope>
    <scope>INTERACTION WITH RUVBL2</scope>
</reference>
<reference evidence="6" key="9">
    <citation type="journal article" date="2007" name="Protein Sci.">
        <title>Solution structure of the zinc finger HIT domain in protein FON.</title>
        <authorList>
            <person name="He F."/>
            <person name="Umehara T."/>
            <person name="Tsuda K."/>
            <person name="Inoue M."/>
            <person name="Kigawa T."/>
            <person name="Matsuda T."/>
            <person name="Yabuki T."/>
            <person name="Aoki M."/>
            <person name="Seki E."/>
            <person name="Terada T."/>
            <person name="Shirouzu M."/>
            <person name="Tanaka A."/>
            <person name="Sugano S."/>
            <person name="Muto Y."/>
            <person name="Yokoyama S."/>
        </authorList>
    </citation>
    <scope>STRUCTURE BY NMR OF 1-46</scope>
</reference>
<reference key="10">
    <citation type="journal article" date="2006" name="Science">
        <title>The consensus coding sequences of human breast and colorectal cancers.</title>
        <authorList>
            <person name="Sjoeblom T."/>
            <person name="Jones S."/>
            <person name="Wood L.D."/>
            <person name="Parsons D.W."/>
            <person name="Lin J."/>
            <person name="Barber T.D."/>
            <person name="Mandelker D."/>
            <person name="Leary R.J."/>
            <person name="Ptak J."/>
            <person name="Silliman N."/>
            <person name="Szabo S."/>
            <person name="Buckhaults P."/>
            <person name="Farrell C."/>
            <person name="Meeh P."/>
            <person name="Markowitz S.D."/>
            <person name="Willis J."/>
            <person name="Dawson D."/>
            <person name="Willson J.K.V."/>
            <person name="Gazdar A.F."/>
            <person name="Hartigan J."/>
            <person name="Wu L."/>
            <person name="Liu C."/>
            <person name="Parmigiani G."/>
            <person name="Park B.H."/>
            <person name="Bachman K.E."/>
            <person name="Papadopoulos N."/>
            <person name="Vogelstein B."/>
            <person name="Kinzler K.W."/>
            <person name="Velculescu V.E."/>
        </authorList>
    </citation>
    <scope>VARIANT [LARGE SCALE ANALYSIS] PRO-59</scope>
</reference>
<protein>
    <recommendedName>
        <fullName>Zinc finger HIT domain-containing protein 2</fullName>
    </recommendedName>
    <alternativeName>
        <fullName>Protein FON</fullName>
    </alternativeName>
</protein>
<accession>Q9UHR6</accession>
<accession>Q3SY14</accession>
<accession>Q8IUV0</accession>
<proteinExistence type="evidence at protein level"/>
<comment type="function">
    <text evidence="5">May act as a bridging factor mediating the interaction between the R2TP/Prefoldin-like (R2TP/PFDL) complex and U5 small nuclear ribonucleoprotein (U5 snRNP) (PubMed:28561026). Required for the interaction of R2TP complex subunit RPAP3 and prefoldin-like subunit URI1 with U5 snRNP proteins EFTUD2 and PRPF8 (PubMed:28561026). May play a role in regulating the composition of the U5 snRNP complex (PubMed:28561026).</text>
</comment>
<comment type="subunit">
    <text evidence="5">Interacts (via HIT-type zinc finger) with RUVBL2 in the presence of ATP or ADP; shows a stronger interaction in the presence of ADP.</text>
</comment>
<comment type="interaction">
    <interactant intactId="EBI-2557592">
        <id>Q9UHR6</id>
    </interactant>
    <interactant intactId="EBI-768015">
        <id>O95400</id>
        <label>CD2BP2</label>
    </interactant>
    <organismsDiffer>false</organismsDiffer>
    <experiments>4</experiments>
</comment>
<comment type="interaction">
    <interactant intactId="EBI-2557592">
        <id>Q9UHR6</id>
    </interactant>
    <interactant intactId="EBI-2680803">
        <id>Q96N16</id>
        <label>JAKMIP1</label>
    </interactant>
    <organismsDiffer>false</organismsDiffer>
    <experiments>3</experiments>
</comment>
<comment type="interaction">
    <interactant intactId="EBI-2557592">
        <id>Q9UHR6</id>
    </interactant>
    <interactant intactId="EBI-2341787">
        <id>Q17RB8</id>
        <label>LONRF1</label>
    </interactant>
    <organismsDiffer>false</organismsDiffer>
    <experiments>3</experiments>
</comment>
<comment type="interaction">
    <interactant intactId="EBI-2557592">
        <id>Q9UHR6</id>
    </interactant>
    <interactant intactId="EBI-353675">
        <id>Q9Y265</id>
        <label>RUVBL1</label>
    </interactant>
    <organismsDiffer>false</organismsDiffer>
    <experiments>9</experiments>
</comment>
<comment type="tissue specificity">
    <text evidence="3">Low expression in most tissues; highly expressed in testis.</text>
</comment>
<sequence>MEPAGPCGFCPAGEVQPARYTCPRCNAPYCSLRCYRTHGTCAENFYRDQVLGELRGCSAPPSRLASALRRLRQQRETEDEPGEAGLSSGPAPGGLSGLWERLAPGEKAAFERLLSRGEAGRLLPPWRPWWWNRGAGPQLLEELDNAPGSDAAELELAPARTPPDSVKDASAAEPAAAERVLGDVPGACTPVVPTRIPAIVSLSRGPVSPLVRFQLPNVLFAYAHTLALYHGGDDALLSDFCATLLGVSGALGAQQVFASAEEALQAAAHVLEAGEHPPGPLGTRGAMHEVARILLGEGPTNQKGYTLAALGDLAQTLGRARKQAVAREERDHLYRARKKCQFLLAWTNENEAALTPLALDCARAHQAHAVVAEEVAALTGELERLWGGPVPPAPRTLIEELPS</sequence>
<keyword id="KW-0002">3D-structure</keyword>
<keyword id="KW-0007">Acetylation</keyword>
<keyword id="KW-0479">Metal-binding</keyword>
<keyword id="KW-0597">Phosphoprotein</keyword>
<keyword id="KW-1267">Proteomics identification</keyword>
<keyword id="KW-1185">Reference proteome</keyword>
<keyword id="KW-0862">Zinc</keyword>
<keyword id="KW-0863">Zinc-finger</keyword>
<dbReference type="EMBL" id="AF119497">
    <property type="protein sequence ID" value="AAF23591.1"/>
    <property type="molecule type" value="mRNA"/>
</dbReference>
<dbReference type="EMBL" id="BC038089">
    <property type="protein sequence ID" value="AAH38089.1"/>
    <property type="molecule type" value="mRNA"/>
</dbReference>
<dbReference type="EMBL" id="BC052240">
    <property type="protein sequence ID" value="AAH52240.1"/>
    <property type="molecule type" value="mRNA"/>
</dbReference>
<dbReference type="CCDS" id="CCDS8094.1"/>
<dbReference type="RefSeq" id="NP_055020.1">
    <property type="nucleotide sequence ID" value="NM_014205.4"/>
</dbReference>
<dbReference type="PDB" id="1X4S">
    <property type="method" value="NMR"/>
    <property type="chains" value="A=1-46"/>
</dbReference>
<dbReference type="PDBsum" id="1X4S"/>
<dbReference type="SMR" id="Q9UHR6"/>
<dbReference type="BioGRID" id="107200">
    <property type="interactions" value="137"/>
</dbReference>
<dbReference type="FunCoup" id="Q9UHR6">
    <property type="interactions" value="686"/>
</dbReference>
<dbReference type="IntAct" id="Q9UHR6">
    <property type="interactions" value="46"/>
</dbReference>
<dbReference type="STRING" id="9606.ENSP00000308548"/>
<dbReference type="iPTMnet" id="Q9UHR6"/>
<dbReference type="PhosphoSitePlus" id="Q9UHR6"/>
<dbReference type="BioMuta" id="ZNHIT2"/>
<dbReference type="DMDM" id="27734232"/>
<dbReference type="jPOST" id="Q9UHR6"/>
<dbReference type="MassIVE" id="Q9UHR6"/>
<dbReference type="PaxDb" id="9606-ENSP00000308548"/>
<dbReference type="PeptideAtlas" id="Q9UHR6"/>
<dbReference type="ProteomicsDB" id="84405"/>
<dbReference type="Pumba" id="Q9UHR6"/>
<dbReference type="Antibodypedia" id="29668">
    <property type="antibodies" value="64 antibodies from 20 providers"/>
</dbReference>
<dbReference type="DNASU" id="741"/>
<dbReference type="Ensembl" id="ENST00000310597.6">
    <property type="protein sequence ID" value="ENSP00000308548.4"/>
    <property type="gene ID" value="ENSG00000174276.7"/>
</dbReference>
<dbReference type="GeneID" id="741"/>
<dbReference type="KEGG" id="hsa:741"/>
<dbReference type="MANE-Select" id="ENST00000310597.6">
    <property type="protein sequence ID" value="ENSP00000308548.4"/>
    <property type="RefSeq nucleotide sequence ID" value="NM_014205.4"/>
    <property type="RefSeq protein sequence ID" value="NP_055020.1"/>
</dbReference>
<dbReference type="UCSC" id="uc001ocw.4">
    <property type="organism name" value="human"/>
</dbReference>
<dbReference type="AGR" id="HGNC:1177"/>
<dbReference type="CTD" id="741"/>
<dbReference type="DisGeNET" id="741"/>
<dbReference type="GeneCards" id="ZNHIT2"/>
<dbReference type="HGNC" id="HGNC:1177">
    <property type="gene designation" value="ZNHIT2"/>
</dbReference>
<dbReference type="HPA" id="ENSG00000174276">
    <property type="expression patterns" value="Tissue enhanced (testis)"/>
</dbReference>
<dbReference type="MIM" id="604575">
    <property type="type" value="gene"/>
</dbReference>
<dbReference type="neXtProt" id="NX_Q9UHR6"/>
<dbReference type="OpenTargets" id="ENSG00000174276"/>
<dbReference type="PharmGKB" id="PA25496"/>
<dbReference type="VEuPathDB" id="HostDB:ENSG00000174276"/>
<dbReference type="eggNOG" id="KOG4317">
    <property type="taxonomic scope" value="Eukaryota"/>
</dbReference>
<dbReference type="GeneTree" id="ENSGT00390000017147"/>
<dbReference type="HOGENOM" id="CLU_039057_1_0_1"/>
<dbReference type="InParanoid" id="Q9UHR6"/>
<dbReference type="OMA" id="WHLWRLL"/>
<dbReference type="OrthoDB" id="10005492at2759"/>
<dbReference type="PAN-GO" id="Q9UHR6">
    <property type="GO annotations" value="0 GO annotations based on evolutionary models"/>
</dbReference>
<dbReference type="PhylomeDB" id="Q9UHR6"/>
<dbReference type="TreeFam" id="TF324864"/>
<dbReference type="PathwayCommons" id="Q9UHR6"/>
<dbReference type="SignaLink" id="Q9UHR6"/>
<dbReference type="BioGRID-ORCS" id="741">
    <property type="hits" value="738 hits in 1162 CRISPR screens"/>
</dbReference>
<dbReference type="EvolutionaryTrace" id="Q9UHR6"/>
<dbReference type="GenomeRNAi" id="741"/>
<dbReference type="Pharos" id="Q9UHR6">
    <property type="development level" value="Tbio"/>
</dbReference>
<dbReference type="PRO" id="PR:Q9UHR6"/>
<dbReference type="Proteomes" id="UP000005640">
    <property type="component" value="Chromosome 11"/>
</dbReference>
<dbReference type="RNAct" id="Q9UHR6">
    <property type="molecule type" value="protein"/>
</dbReference>
<dbReference type="Bgee" id="ENSG00000174276">
    <property type="expression patterns" value="Expressed in right testis and 96 other cell types or tissues"/>
</dbReference>
<dbReference type="ExpressionAtlas" id="Q9UHR6">
    <property type="expression patterns" value="baseline and differential"/>
</dbReference>
<dbReference type="GO" id="GO:0008270">
    <property type="term" value="F:zinc ion binding"/>
    <property type="evidence" value="ECO:0007669"/>
    <property type="project" value="UniProtKB-KW"/>
</dbReference>
<dbReference type="CDD" id="cd23024">
    <property type="entry name" value="zf-HIT_ZNHIT2-3"/>
    <property type="match status" value="1"/>
</dbReference>
<dbReference type="Gene3D" id="3.30.60.190">
    <property type="match status" value="1"/>
</dbReference>
<dbReference type="InterPro" id="IPR007529">
    <property type="entry name" value="Znf_HIT"/>
</dbReference>
<dbReference type="InterPro" id="IPR039646">
    <property type="entry name" value="ZNHIT2"/>
</dbReference>
<dbReference type="PANTHER" id="PTHR15555">
    <property type="entry name" value="ZINC FINGER HIT DOMAIN CONTAINING PROTEIN 2 PROTEIN FON -RELATED"/>
    <property type="match status" value="1"/>
</dbReference>
<dbReference type="PANTHER" id="PTHR15555:SF0">
    <property type="entry name" value="ZINC FINGER HIT DOMAIN-CONTAINING PROTEIN 2"/>
    <property type="match status" value="1"/>
</dbReference>
<dbReference type="Pfam" id="PF04438">
    <property type="entry name" value="zf-HIT"/>
    <property type="match status" value="1"/>
</dbReference>
<dbReference type="SUPFAM" id="SSF144232">
    <property type="entry name" value="HIT/MYND zinc finger-like"/>
    <property type="match status" value="1"/>
</dbReference>
<dbReference type="PROSITE" id="PS51083">
    <property type="entry name" value="ZF_HIT"/>
    <property type="match status" value="1"/>
</dbReference>
<evidence type="ECO:0000255" key="1">
    <source>
        <dbReference type="PROSITE-ProRule" id="PRU00453"/>
    </source>
</evidence>
<evidence type="ECO:0000256" key="2">
    <source>
        <dbReference type="SAM" id="MobiDB-lite"/>
    </source>
</evidence>
<evidence type="ECO:0000269" key="3">
    <source>
    </source>
</evidence>
<evidence type="ECO:0000269" key="4">
    <source>
    </source>
</evidence>
<evidence type="ECO:0000269" key="5">
    <source>
    </source>
</evidence>
<evidence type="ECO:0007744" key="6">
    <source>
        <dbReference type="PDB" id="1X4S"/>
    </source>
</evidence>
<evidence type="ECO:0007744" key="7">
    <source>
    </source>
</evidence>
<evidence type="ECO:0007744" key="8">
    <source>
    </source>
</evidence>
<evidence type="ECO:0007744" key="9">
    <source>
    </source>
</evidence>
<evidence type="ECO:0007829" key="10">
    <source>
        <dbReference type="PDB" id="1X4S"/>
    </source>
</evidence>